<evidence type="ECO:0000255" key="1">
    <source>
        <dbReference type="HAMAP-Rule" id="MF_01217"/>
    </source>
</evidence>
<evidence type="ECO:0000255" key="2">
    <source>
        <dbReference type="PROSITE-ProRule" id="PRU00258"/>
    </source>
</evidence>
<keyword id="KW-0963">Cytoplasm</keyword>
<keyword id="KW-0275">Fatty acid biosynthesis</keyword>
<keyword id="KW-0276">Fatty acid metabolism</keyword>
<keyword id="KW-0444">Lipid biosynthesis</keyword>
<keyword id="KW-0443">Lipid metabolism</keyword>
<keyword id="KW-0596">Phosphopantetheine</keyword>
<keyword id="KW-0597">Phosphoprotein</keyword>
<keyword id="KW-1185">Reference proteome</keyword>
<gene>
    <name evidence="1" type="primary">acpP</name>
    <name type="ordered locus">LBA1307</name>
</gene>
<comment type="function">
    <text evidence="1">Carrier of the growing fatty acid chain in fatty acid biosynthesis.</text>
</comment>
<comment type="pathway">
    <text evidence="1">Lipid metabolism; fatty acid biosynthesis.</text>
</comment>
<comment type="subcellular location">
    <subcellularLocation>
        <location evidence="1">Cytoplasm</location>
    </subcellularLocation>
</comment>
<comment type="PTM">
    <text evidence="1">4'-phosphopantetheine is transferred from CoA to a specific serine of apo-ACP by AcpS. This modification is essential for activity because fatty acids are bound in thioester linkage to the sulfhydryl of the prosthetic group.</text>
</comment>
<comment type="similarity">
    <text evidence="1">Belongs to the acyl carrier protein (ACP) family.</text>
</comment>
<name>ACP_LACAC</name>
<accession>Q5FJI8</accession>
<proteinExistence type="inferred from homology"/>
<feature type="chain" id="PRO_1000073124" description="Acyl carrier protein">
    <location>
        <begin position="1"/>
        <end position="80"/>
    </location>
</feature>
<feature type="domain" description="Carrier" evidence="2">
    <location>
        <begin position="4"/>
        <end position="79"/>
    </location>
</feature>
<feature type="modified residue" description="O-(pantetheine 4'-phosphoryl)serine" evidence="2">
    <location>
        <position position="39"/>
    </location>
</feature>
<dbReference type="EMBL" id="CP000033">
    <property type="protein sequence ID" value="AAV43136.1"/>
    <property type="molecule type" value="Genomic_DNA"/>
</dbReference>
<dbReference type="RefSeq" id="WP_003547899.1">
    <property type="nucleotide sequence ID" value="NC_006814.3"/>
</dbReference>
<dbReference type="RefSeq" id="YP_194167.1">
    <property type="nucleotide sequence ID" value="NC_006814.3"/>
</dbReference>
<dbReference type="SMR" id="Q5FJI8"/>
<dbReference type="STRING" id="272621.LBA1307"/>
<dbReference type="GeneID" id="93289608"/>
<dbReference type="KEGG" id="lac:LBA1307"/>
<dbReference type="PATRIC" id="fig|272621.13.peg.1237"/>
<dbReference type="eggNOG" id="COG0236">
    <property type="taxonomic scope" value="Bacteria"/>
</dbReference>
<dbReference type="HOGENOM" id="CLU_108696_5_1_9"/>
<dbReference type="OrthoDB" id="9804551at2"/>
<dbReference type="BioCyc" id="LACI272621:G1G49-1286-MONOMER"/>
<dbReference type="UniPathway" id="UPA00094"/>
<dbReference type="Proteomes" id="UP000006381">
    <property type="component" value="Chromosome"/>
</dbReference>
<dbReference type="GO" id="GO:0005829">
    <property type="term" value="C:cytosol"/>
    <property type="evidence" value="ECO:0007669"/>
    <property type="project" value="TreeGrafter"/>
</dbReference>
<dbReference type="GO" id="GO:0016020">
    <property type="term" value="C:membrane"/>
    <property type="evidence" value="ECO:0007669"/>
    <property type="project" value="GOC"/>
</dbReference>
<dbReference type="GO" id="GO:0000035">
    <property type="term" value="F:acyl binding"/>
    <property type="evidence" value="ECO:0007669"/>
    <property type="project" value="TreeGrafter"/>
</dbReference>
<dbReference type="GO" id="GO:0000036">
    <property type="term" value="F:acyl carrier activity"/>
    <property type="evidence" value="ECO:0007669"/>
    <property type="project" value="UniProtKB-UniRule"/>
</dbReference>
<dbReference type="GO" id="GO:0009245">
    <property type="term" value="P:lipid A biosynthetic process"/>
    <property type="evidence" value="ECO:0007669"/>
    <property type="project" value="TreeGrafter"/>
</dbReference>
<dbReference type="Gene3D" id="1.10.1200.10">
    <property type="entry name" value="ACP-like"/>
    <property type="match status" value="1"/>
</dbReference>
<dbReference type="HAMAP" id="MF_01217">
    <property type="entry name" value="Acyl_carrier"/>
    <property type="match status" value="1"/>
</dbReference>
<dbReference type="InterPro" id="IPR003231">
    <property type="entry name" value="ACP"/>
</dbReference>
<dbReference type="InterPro" id="IPR036736">
    <property type="entry name" value="ACP-like_sf"/>
</dbReference>
<dbReference type="InterPro" id="IPR009081">
    <property type="entry name" value="PP-bd_ACP"/>
</dbReference>
<dbReference type="NCBIfam" id="TIGR00517">
    <property type="entry name" value="acyl_carrier"/>
    <property type="match status" value="1"/>
</dbReference>
<dbReference type="NCBIfam" id="NF002148">
    <property type="entry name" value="PRK00982.1-2"/>
    <property type="match status" value="1"/>
</dbReference>
<dbReference type="NCBIfam" id="NF002150">
    <property type="entry name" value="PRK00982.1-4"/>
    <property type="match status" value="1"/>
</dbReference>
<dbReference type="NCBIfam" id="NF002151">
    <property type="entry name" value="PRK00982.1-5"/>
    <property type="match status" value="1"/>
</dbReference>
<dbReference type="NCBIfam" id="NF009104">
    <property type="entry name" value="PRK12449.1"/>
    <property type="match status" value="1"/>
</dbReference>
<dbReference type="PANTHER" id="PTHR20863">
    <property type="entry name" value="ACYL CARRIER PROTEIN"/>
    <property type="match status" value="1"/>
</dbReference>
<dbReference type="PANTHER" id="PTHR20863:SF76">
    <property type="entry name" value="CARRIER DOMAIN-CONTAINING PROTEIN"/>
    <property type="match status" value="1"/>
</dbReference>
<dbReference type="Pfam" id="PF00550">
    <property type="entry name" value="PP-binding"/>
    <property type="match status" value="1"/>
</dbReference>
<dbReference type="SUPFAM" id="SSF47336">
    <property type="entry name" value="ACP-like"/>
    <property type="match status" value="1"/>
</dbReference>
<dbReference type="PROSITE" id="PS50075">
    <property type="entry name" value="CARRIER"/>
    <property type="match status" value="1"/>
</dbReference>
<protein>
    <recommendedName>
        <fullName evidence="1">Acyl carrier protein</fullName>
        <shortName evidence="1">ACP</shortName>
    </recommendedName>
</protein>
<reference key="1">
    <citation type="journal article" date="2005" name="Proc. Natl. Acad. Sci. U.S.A.">
        <title>Complete genome sequence of the probiotic lactic acid bacterium Lactobacillus acidophilus NCFM.</title>
        <authorList>
            <person name="Altermann E."/>
            <person name="Russell W.M."/>
            <person name="Azcarate-Peril M.A."/>
            <person name="Barrangou R."/>
            <person name="Buck B.L."/>
            <person name="McAuliffe O."/>
            <person name="Souther N."/>
            <person name="Dobson A."/>
            <person name="Duong T."/>
            <person name="Callanan M."/>
            <person name="Lick S."/>
            <person name="Hamrick A."/>
            <person name="Cano R."/>
            <person name="Klaenhammer T.R."/>
        </authorList>
    </citation>
    <scope>NUCLEOTIDE SEQUENCE [LARGE SCALE GENOMIC DNA]</scope>
    <source>
        <strain>ATCC 700396 / NCK56 / N2 / NCFM</strain>
    </source>
</reference>
<organism>
    <name type="scientific">Lactobacillus acidophilus (strain ATCC 700396 / NCK56 / N2 / NCFM)</name>
    <dbReference type="NCBI Taxonomy" id="272621"/>
    <lineage>
        <taxon>Bacteria</taxon>
        <taxon>Bacillati</taxon>
        <taxon>Bacillota</taxon>
        <taxon>Bacilli</taxon>
        <taxon>Lactobacillales</taxon>
        <taxon>Lactobacillaceae</taxon>
        <taxon>Lactobacillus</taxon>
    </lineage>
</organism>
<sequence length="80" mass="9057">MSEEEIFNKIKDLIADNFEVDKDSITENTNFMNDLDADSIDLVEFILQLEDEFGAEIPDDEAEKIKTVGDAVSYIKSHQG</sequence>